<protein>
    <recommendedName>
        <fullName evidence="1">Holliday junction branch migration complex subunit RuvA</fullName>
    </recommendedName>
</protein>
<comment type="function">
    <text evidence="1">The RuvA-RuvB-RuvC complex processes Holliday junction (HJ) DNA during genetic recombination and DNA repair, while the RuvA-RuvB complex plays an important role in the rescue of blocked DNA replication forks via replication fork reversal (RFR). RuvA specifically binds to HJ cruciform DNA, conferring on it an open structure. The RuvB hexamer acts as an ATP-dependent pump, pulling dsDNA into and through the RuvAB complex. HJ branch migration allows RuvC to scan DNA until it finds its consensus sequence, where it cleaves and resolves the cruciform DNA.</text>
</comment>
<comment type="subunit">
    <text evidence="1">Homotetramer. Forms an RuvA(8)-RuvB(12)-Holliday junction (HJ) complex. HJ DNA is sandwiched between 2 RuvA tetramers; dsDNA enters through RuvA and exits via RuvB. An RuvB hexamer assembles on each DNA strand where it exits the tetramer. Each RuvB hexamer is contacted by two RuvA subunits (via domain III) on 2 adjacent RuvB subunits; this complex drives branch migration. In the full resolvosome a probable DNA-RuvA(4)-RuvB(12)-RuvC(2) complex forms which resolves the HJ.</text>
</comment>
<comment type="subcellular location">
    <subcellularLocation>
        <location evidence="1">Cytoplasm</location>
    </subcellularLocation>
</comment>
<comment type="domain">
    <text evidence="1">Has three domains with a flexible linker between the domains II and III and assumes an 'L' shape. Domain III is highly mobile and contacts RuvB.</text>
</comment>
<comment type="similarity">
    <text evidence="1">Belongs to the RuvA family.</text>
</comment>
<keyword id="KW-0963">Cytoplasm</keyword>
<keyword id="KW-0227">DNA damage</keyword>
<keyword id="KW-0233">DNA recombination</keyword>
<keyword id="KW-0234">DNA repair</keyword>
<keyword id="KW-0238">DNA-binding</keyword>
<name>RUVA_ALIFM</name>
<proteinExistence type="inferred from homology"/>
<sequence>MIGRLRGNLLEKQPPELLIEVSGIGYEVQMPMSCFYELPEVGSEAIIYTHYVVREDAQLLYGFNTKNERALFREVIKANGVGPKLGLAILSGMTAAQFVQSVEREDISTLVKLPGVGKKTAERLVVEMKDRLKGWGAGDLFTPATDAAPMDDGSEFITSPQSAVDEAVSALIALGYKPQQASKTVSQVAKPDMTSEVLIRESLKSMI</sequence>
<dbReference type="EMBL" id="CP001139">
    <property type="protein sequence ID" value="ACH66376.1"/>
    <property type="molecule type" value="Genomic_DNA"/>
</dbReference>
<dbReference type="RefSeq" id="WP_012533683.1">
    <property type="nucleotide sequence ID" value="NC_011184.1"/>
</dbReference>
<dbReference type="SMR" id="B5FCQ1"/>
<dbReference type="KEGG" id="vfm:VFMJ11_0992"/>
<dbReference type="HOGENOM" id="CLU_087936_0_0_6"/>
<dbReference type="Proteomes" id="UP000001857">
    <property type="component" value="Chromosome I"/>
</dbReference>
<dbReference type="GO" id="GO:0005737">
    <property type="term" value="C:cytoplasm"/>
    <property type="evidence" value="ECO:0007669"/>
    <property type="project" value="UniProtKB-SubCell"/>
</dbReference>
<dbReference type="GO" id="GO:0009379">
    <property type="term" value="C:Holliday junction helicase complex"/>
    <property type="evidence" value="ECO:0007669"/>
    <property type="project" value="InterPro"/>
</dbReference>
<dbReference type="GO" id="GO:0048476">
    <property type="term" value="C:Holliday junction resolvase complex"/>
    <property type="evidence" value="ECO:0007669"/>
    <property type="project" value="UniProtKB-UniRule"/>
</dbReference>
<dbReference type="GO" id="GO:0005524">
    <property type="term" value="F:ATP binding"/>
    <property type="evidence" value="ECO:0007669"/>
    <property type="project" value="InterPro"/>
</dbReference>
<dbReference type="GO" id="GO:0000400">
    <property type="term" value="F:four-way junction DNA binding"/>
    <property type="evidence" value="ECO:0007669"/>
    <property type="project" value="UniProtKB-UniRule"/>
</dbReference>
<dbReference type="GO" id="GO:0009378">
    <property type="term" value="F:four-way junction helicase activity"/>
    <property type="evidence" value="ECO:0007669"/>
    <property type="project" value="InterPro"/>
</dbReference>
<dbReference type="GO" id="GO:0006310">
    <property type="term" value="P:DNA recombination"/>
    <property type="evidence" value="ECO:0007669"/>
    <property type="project" value="UniProtKB-UniRule"/>
</dbReference>
<dbReference type="GO" id="GO:0006281">
    <property type="term" value="P:DNA repair"/>
    <property type="evidence" value="ECO:0007669"/>
    <property type="project" value="UniProtKB-UniRule"/>
</dbReference>
<dbReference type="CDD" id="cd14332">
    <property type="entry name" value="UBA_RuvA_C"/>
    <property type="match status" value="1"/>
</dbReference>
<dbReference type="FunFam" id="1.10.150.20:FF:000012">
    <property type="entry name" value="Holliday junction ATP-dependent DNA helicase RuvA"/>
    <property type="match status" value="1"/>
</dbReference>
<dbReference type="FunFam" id="2.40.50.140:FF:000083">
    <property type="entry name" value="Holliday junction ATP-dependent DNA helicase RuvA"/>
    <property type="match status" value="1"/>
</dbReference>
<dbReference type="Gene3D" id="1.10.150.20">
    <property type="entry name" value="5' to 3' exonuclease, C-terminal subdomain"/>
    <property type="match status" value="1"/>
</dbReference>
<dbReference type="Gene3D" id="1.10.8.10">
    <property type="entry name" value="DNA helicase RuvA subunit, C-terminal domain"/>
    <property type="match status" value="1"/>
</dbReference>
<dbReference type="Gene3D" id="2.40.50.140">
    <property type="entry name" value="Nucleic acid-binding proteins"/>
    <property type="match status" value="1"/>
</dbReference>
<dbReference type="HAMAP" id="MF_00031">
    <property type="entry name" value="DNA_HJ_migration_RuvA"/>
    <property type="match status" value="1"/>
</dbReference>
<dbReference type="InterPro" id="IPR013849">
    <property type="entry name" value="DNA_helicase_Holl-junc_RuvA_I"/>
</dbReference>
<dbReference type="InterPro" id="IPR003583">
    <property type="entry name" value="Hlx-hairpin-Hlx_DNA-bd_motif"/>
</dbReference>
<dbReference type="InterPro" id="IPR012340">
    <property type="entry name" value="NA-bd_OB-fold"/>
</dbReference>
<dbReference type="InterPro" id="IPR000085">
    <property type="entry name" value="RuvA"/>
</dbReference>
<dbReference type="InterPro" id="IPR010994">
    <property type="entry name" value="RuvA_2-like"/>
</dbReference>
<dbReference type="InterPro" id="IPR011114">
    <property type="entry name" value="RuvA_C"/>
</dbReference>
<dbReference type="InterPro" id="IPR036267">
    <property type="entry name" value="RuvA_C_sf"/>
</dbReference>
<dbReference type="NCBIfam" id="TIGR00084">
    <property type="entry name" value="ruvA"/>
    <property type="match status" value="1"/>
</dbReference>
<dbReference type="Pfam" id="PF14520">
    <property type="entry name" value="HHH_5"/>
    <property type="match status" value="1"/>
</dbReference>
<dbReference type="Pfam" id="PF07499">
    <property type="entry name" value="RuvA_C"/>
    <property type="match status" value="1"/>
</dbReference>
<dbReference type="Pfam" id="PF01330">
    <property type="entry name" value="RuvA_N"/>
    <property type="match status" value="1"/>
</dbReference>
<dbReference type="SMART" id="SM00278">
    <property type="entry name" value="HhH1"/>
    <property type="match status" value="2"/>
</dbReference>
<dbReference type="SUPFAM" id="SSF46929">
    <property type="entry name" value="DNA helicase RuvA subunit, C-terminal domain"/>
    <property type="match status" value="1"/>
</dbReference>
<dbReference type="SUPFAM" id="SSF50249">
    <property type="entry name" value="Nucleic acid-binding proteins"/>
    <property type="match status" value="1"/>
</dbReference>
<dbReference type="SUPFAM" id="SSF47781">
    <property type="entry name" value="RuvA domain 2-like"/>
    <property type="match status" value="1"/>
</dbReference>
<organism>
    <name type="scientific">Aliivibrio fischeri (strain MJ11)</name>
    <name type="common">Vibrio fischeri</name>
    <dbReference type="NCBI Taxonomy" id="388396"/>
    <lineage>
        <taxon>Bacteria</taxon>
        <taxon>Pseudomonadati</taxon>
        <taxon>Pseudomonadota</taxon>
        <taxon>Gammaproteobacteria</taxon>
        <taxon>Vibrionales</taxon>
        <taxon>Vibrionaceae</taxon>
        <taxon>Aliivibrio</taxon>
    </lineage>
</organism>
<gene>
    <name evidence="1" type="primary">ruvA</name>
    <name type="ordered locus">VFMJ11_0992</name>
</gene>
<evidence type="ECO:0000255" key="1">
    <source>
        <dbReference type="HAMAP-Rule" id="MF_00031"/>
    </source>
</evidence>
<feature type="chain" id="PRO_1000090384" description="Holliday junction branch migration complex subunit RuvA">
    <location>
        <begin position="1"/>
        <end position="207"/>
    </location>
</feature>
<feature type="region of interest" description="Domain I" evidence="1">
    <location>
        <begin position="1"/>
        <end position="64"/>
    </location>
</feature>
<feature type="region of interest" description="Domain II" evidence="1">
    <location>
        <begin position="65"/>
        <end position="143"/>
    </location>
</feature>
<feature type="region of interest" description="Flexible linker" evidence="1">
    <location>
        <begin position="144"/>
        <end position="158"/>
    </location>
</feature>
<feature type="region of interest" description="Domain III" evidence="1">
    <location>
        <begin position="159"/>
        <end position="207"/>
    </location>
</feature>
<reference key="1">
    <citation type="submission" date="2008-08" db="EMBL/GenBank/DDBJ databases">
        <title>Complete sequence of Vibrio fischeri strain MJ11.</title>
        <authorList>
            <person name="Mandel M.J."/>
            <person name="Stabb E.V."/>
            <person name="Ruby E.G."/>
            <person name="Ferriera S."/>
            <person name="Johnson J."/>
            <person name="Kravitz S."/>
            <person name="Beeson K."/>
            <person name="Sutton G."/>
            <person name="Rogers Y.-H."/>
            <person name="Friedman R."/>
            <person name="Frazier M."/>
            <person name="Venter J.C."/>
        </authorList>
    </citation>
    <scope>NUCLEOTIDE SEQUENCE [LARGE SCALE GENOMIC DNA]</scope>
    <source>
        <strain>MJ11</strain>
    </source>
</reference>
<accession>B5FCQ1</accession>